<feature type="chain" id="PRO_1000145229" description="Urease accessory protein UreG">
    <location>
        <begin position="1"/>
        <end position="204"/>
    </location>
</feature>
<feature type="binding site" evidence="1">
    <location>
        <begin position="11"/>
        <end position="18"/>
    </location>
    <ligand>
        <name>GTP</name>
        <dbReference type="ChEBI" id="CHEBI:37565"/>
    </ligand>
</feature>
<gene>
    <name evidence="1" type="primary">ureG</name>
    <name type="ordered locus">NWMN_2193</name>
</gene>
<proteinExistence type="inferred from homology"/>
<keyword id="KW-0143">Chaperone</keyword>
<keyword id="KW-0963">Cytoplasm</keyword>
<keyword id="KW-0342">GTP-binding</keyword>
<keyword id="KW-0996">Nickel insertion</keyword>
<keyword id="KW-0547">Nucleotide-binding</keyword>
<protein>
    <recommendedName>
        <fullName evidence="1">Urease accessory protein UreG</fullName>
    </recommendedName>
</protein>
<evidence type="ECO:0000255" key="1">
    <source>
        <dbReference type="HAMAP-Rule" id="MF_01389"/>
    </source>
</evidence>
<sequence length="204" mass="22345">MANPIKIGIGGPVGAGKTQLIEKVVKRLSKEMSIGVITNDIYTKEDEKILVNSGVLPESRIIGVETGGCPHTAIREDASMNFAAIDELLERHDDIELIFIESGGDNLAATFSPELVDFSIYIIDVAQGEKIPRKGGQGMIKSDFFVINKTDLAPYVGASLEQMAEDTKVFRGKRPFTFTNLKTDEGLDEVIDWIERDTLLKGLS</sequence>
<accession>A6QJD3</accession>
<organism>
    <name type="scientific">Staphylococcus aureus (strain Newman)</name>
    <dbReference type="NCBI Taxonomy" id="426430"/>
    <lineage>
        <taxon>Bacteria</taxon>
        <taxon>Bacillati</taxon>
        <taxon>Bacillota</taxon>
        <taxon>Bacilli</taxon>
        <taxon>Bacillales</taxon>
        <taxon>Staphylococcaceae</taxon>
        <taxon>Staphylococcus</taxon>
    </lineage>
</organism>
<reference key="1">
    <citation type="journal article" date="2008" name="J. Bacteriol.">
        <title>Genome sequence of Staphylococcus aureus strain Newman and comparative analysis of staphylococcal genomes: polymorphism and evolution of two major pathogenicity islands.</title>
        <authorList>
            <person name="Baba T."/>
            <person name="Bae T."/>
            <person name="Schneewind O."/>
            <person name="Takeuchi F."/>
            <person name="Hiramatsu K."/>
        </authorList>
    </citation>
    <scope>NUCLEOTIDE SEQUENCE [LARGE SCALE GENOMIC DNA]</scope>
    <source>
        <strain>Newman</strain>
    </source>
</reference>
<comment type="function">
    <text evidence="1">Facilitates the functional incorporation of the urease nickel metallocenter. This process requires GTP hydrolysis, probably effectuated by UreG.</text>
</comment>
<comment type="subunit">
    <text evidence="1">Homodimer. UreD, UreF and UreG form a complex that acts as a GTP-hydrolysis-dependent molecular chaperone, activating the urease apoprotein by helping to assemble the nickel containing metallocenter of UreC. The UreE protein probably delivers the nickel.</text>
</comment>
<comment type="subcellular location">
    <subcellularLocation>
        <location evidence="1">Cytoplasm</location>
    </subcellularLocation>
</comment>
<comment type="similarity">
    <text evidence="1">Belongs to the SIMIBI class G3E GTPase family. UreG subfamily.</text>
</comment>
<dbReference type="EMBL" id="AP009351">
    <property type="protein sequence ID" value="BAF68465.1"/>
    <property type="molecule type" value="Genomic_DNA"/>
</dbReference>
<dbReference type="RefSeq" id="WP_000002973.1">
    <property type="nucleotide sequence ID" value="NZ_JBBIAE010000006.1"/>
</dbReference>
<dbReference type="SMR" id="A6QJD3"/>
<dbReference type="KEGG" id="sae:NWMN_2193"/>
<dbReference type="HOGENOM" id="CLU_072144_1_0_9"/>
<dbReference type="Proteomes" id="UP000006386">
    <property type="component" value="Chromosome"/>
</dbReference>
<dbReference type="GO" id="GO:0005737">
    <property type="term" value="C:cytoplasm"/>
    <property type="evidence" value="ECO:0007669"/>
    <property type="project" value="UniProtKB-SubCell"/>
</dbReference>
<dbReference type="GO" id="GO:0005525">
    <property type="term" value="F:GTP binding"/>
    <property type="evidence" value="ECO:0007669"/>
    <property type="project" value="UniProtKB-KW"/>
</dbReference>
<dbReference type="GO" id="GO:0003924">
    <property type="term" value="F:GTPase activity"/>
    <property type="evidence" value="ECO:0007669"/>
    <property type="project" value="InterPro"/>
</dbReference>
<dbReference type="GO" id="GO:0016151">
    <property type="term" value="F:nickel cation binding"/>
    <property type="evidence" value="ECO:0007669"/>
    <property type="project" value="UniProtKB-UniRule"/>
</dbReference>
<dbReference type="GO" id="GO:0043419">
    <property type="term" value="P:urea catabolic process"/>
    <property type="evidence" value="ECO:0007669"/>
    <property type="project" value="InterPro"/>
</dbReference>
<dbReference type="CDD" id="cd05540">
    <property type="entry name" value="UreG"/>
    <property type="match status" value="1"/>
</dbReference>
<dbReference type="Gene3D" id="3.40.50.300">
    <property type="entry name" value="P-loop containing nucleotide triphosphate hydrolases"/>
    <property type="match status" value="1"/>
</dbReference>
<dbReference type="HAMAP" id="MF_01389">
    <property type="entry name" value="UreG"/>
    <property type="match status" value="1"/>
</dbReference>
<dbReference type="InterPro" id="IPR003495">
    <property type="entry name" value="CobW/HypB/UreG_nucleotide-bd"/>
</dbReference>
<dbReference type="InterPro" id="IPR027417">
    <property type="entry name" value="P-loop_NTPase"/>
</dbReference>
<dbReference type="InterPro" id="IPR004400">
    <property type="entry name" value="UreG"/>
</dbReference>
<dbReference type="NCBIfam" id="TIGR00101">
    <property type="entry name" value="ureG"/>
    <property type="match status" value="1"/>
</dbReference>
<dbReference type="PANTHER" id="PTHR31715">
    <property type="entry name" value="UREASE ACCESSORY PROTEIN G"/>
    <property type="match status" value="1"/>
</dbReference>
<dbReference type="PANTHER" id="PTHR31715:SF0">
    <property type="entry name" value="UREASE ACCESSORY PROTEIN G"/>
    <property type="match status" value="1"/>
</dbReference>
<dbReference type="Pfam" id="PF02492">
    <property type="entry name" value="cobW"/>
    <property type="match status" value="1"/>
</dbReference>
<dbReference type="PIRSF" id="PIRSF005624">
    <property type="entry name" value="Ni-bind_GTPase"/>
    <property type="match status" value="1"/>
</dbReference>
<dbReference type="SUPFAM" id="SSF52540">
    <property type="entry name" value="P-loop containing nucleoside triphosphate hydrolases"/>
    <property type="match status" value="1"/>
</dbReference>
<name>UREG_STAAE</name>